<organism>
    <name type="scientific">Leifsonia xyli subsp. xyli (strain CTCB07)</name>
    <dbReference type="NCBI Taxonomy" id="281090"/>
    <lineage>
        <taxon>Bacteria</taxon>
        <taxon>Bacillati</taxon>
        <taxon>Actinomycetota</taxon>
        <taxon>Actinomycetes</taxon>
        <taxon>Micrococcales</taxon>
        <taxon>Microbacteriaceae</taxon>
        <taxon>Leifsonia</taxon>
    </lineage>
</organism>
<comment type="function">
    <text evidence="1">Involved in transcription antitermination. Required for transcription of ribosomal RNA (rRNA) genes. Binds specifically to the boxA antiterminator sequence of the ribosomal RNA (rrn) operons.</text>
</comment>
<comment type="similarity">
    <text evidence="1">Belongs to the NusB family.</text>
</comment>
<accession>Q6AF91</accession>
<sequence length="144" mass="15818">MSARTKARKRALDLLFSADVRQISLAHALAVEAERAANEPAREASWLYAREIVDGVIDNQEEIDEQIETYAQGWTLARMPAVDRAILRIGVWELLFNDQVPDGVAISEAVEAATVLSTDDSAGFVNGLLAKIAQNKPRDGEVDR</sequence>
<reference key="1">
    <citation type="journal article" date="2004" name="Mol. Plant Microbe Interact.">
        <title>The genome sequence of the Gram-positive sugarcane pathogen Leifsonia xyli subsp. xyli.</title>
        <authorList>
            <person name="Monteiro-Vitorello C.B."/>
            <person name="Camargo L.E.A."/>
            <person name="Van Sluys M.A."/>
            <person name="Kitajima J.P."/>
            <person name="Truffi D."/>
            <person name="do Amaral A.M."/>
            <person name="Harakava R."/>
            <person name="de Oliveira J.C.F."/>
            <person name="Wood D."/>
            <person name="de Oliveira M.C."/>
            <person name="Miyaki C.Y."/>
            <person name="Takita M.A."/>
            <person name="da Silva A.C.R."/>
            <person name="Furlan L.R."/>
            <person name="Carraro D.M."/>
            <person name="Camarotte G."/>
            <person name="Almeida N.F. Jr."/>
            <person name="Carrer H."/>
            <person name="Coutinho L.L."/>
            <person name="El-Dorry H.A."/>
            <person name="Ferro M.I.T."/>
            <person name="Gagliardi P.R."/>
            <person name="Giglioti E."/>
            <person name="Goldman M.H.S."/>
            <person name="Goldman G.H."/>
            <person name="Kimura E.T."/>
            <person name="Ferro E.S."/>
            <person name="Kuramae E.E."/>
            <person name="Lemos E.G.M."/>
            <person name="Lemos M.V.F."/>
            <person name="Mauro S.M.Z."/>
            <person name="Machado M.A."/>
            <person name="Marino C.L."/>
            <person name="Menck C.F."/>
            <person name="Nunes L.R."/>
            <person name="Oliveira R.C."/>
            <person name="Pereira G.G."/>
            <person name="Siqueira W."/>
            <person name="de Souza A.A."/>
            <person name="Tsai S.M."/>
            <person name="Zanca A.S."/>
            <person name="Simpson A.J.G."/>
            <person name="Brumbley S.M."/>
            <person name="Setubal J.C."/>
        </authorList>
    </citation>
    <scope>NUCLEOTIDE SEQUENCE [LARGE SCALE GENOMIC DNA]</scope>
    <source>
        <strain>CTCB07</strain>
    </source>
</reference>
<name>NUSB_LEIXX</name>
<proteinExistence type="inferred from homology"/>
<evidence type="ECO:0000255" key="1">
    <source>
        <dbReference type="HAMAP-Rule" id="MF_00073"/>
    </source>
</evidence>
<dbReference type="EMBL" id="AE016822">
    <property type="protein sequence ID" value="AAT88954.1"/>
    <property type="molecule type" value="Genomic_DNA"/>
</dbReference>
<dbReference type="RefSeq" id="WP_011185950.1">
    <property type="nucleotide sequence ID" value="NC_006087.1"/>
</dbReference>
<dbReference type="SMR" id="Q6AF91"/>
<dbReference type="STRING" id="281090.Lxx11010"/>
<dbReference type="KEGG" id="lxx:Lxx11010"/>
<dbReference type="eggNOG" id="COG0781">
    <property type="taxonomic scope" value="Bacteria"/>
</dbReference>
<dbReference type="HOGENOM" id="CLU_087843_2_3_11"/>
<dbReference type="Proteomes" id="UP000001306">
    <property type="component" value="Chromosome"/>
</dbReference>
<dbReference type="GO" id="GO:0005829">
    <property type="term" value="C:cytosol"/>
    <property type="evidence" value="ECO:0007669"/>
    <property type="project" value="TreeGrafter"/>
</dbReference>
<dbReference type="GO" id="GO:0003723">
    <property type="term" value="F:RNA binding"/>
    <property type="evidence" value="ECO:0007669"/>
    <property type="project" value="UniProtKB-UniRule"/>
</dbReference>
<dbReference type="GO" id="GO:0006353">
    <property type="term" value="P:DNA-templated transcription termination"/>
    <property type="evidence" value="ECO:0007669"/>
    <property type="project" value="UniProtKB-UniRule"/>
</dbReference>
<dbReference type="GO" id="GO:0031564">
    <property type="term" value="P:transcription antitermination"/>
    <property type="evidence" value="ECO:0007669"/>
    <property type="project" value="UniProtKB-KW"/>
</dbReference>
<dbReference type="Gene3D" id="1.10.940.10">
    <property type="entry name" value="NusB-like"/>
    <property type="match status" value="1"/>
</dbReference>
<dbReference type="HAMAP" id="MF_00073">
    <property type="entry name" value="NusB"/>
    <property type="match status" value="1"/>
</dbReference>
<dbReference type="InterPro" id="IPR035926">
    <property type="entry name" value="NusB-like_sf"/>
</dbReference>
<dbReference type="InterPro" id="IPR011605">
    <property type="entry name" value="NusB_fam"/>
</dbReference>
<dbReference type="InterPro" id="IPR006027">
    <property type="entry name" value="NusB_RsmB_TIM44"/>
</dbReference>
<dbReference type="NCBIfam" id="TIGR01951">
    <property type="entry name" value="nusB"/>
    <property type="match status" value="1"/>
</dbReference>
<dbReference type="PANTHER" id="PTHR11078:SF3">
    <property type="entry name" value="ANTITERMINATION NUSB DOMAIN-CONTAINING PROTEIN"/>
    <property type="match status" value="1"/>
</dbReference>
<dbReference type="PANTHER" id="PTHR11078">
    <property type="entry name" value="N UTILIZATION SUBSTANCE PROTEIN B-RELATED"/>
    <property type="match status" value="1"/>
</dbReference>
<dbReference type="Pfam" id="PF01029">
    <property type="entry name" value="NusB"/>
    <property type="match status" value="1"/>
</dbReference>
<dbReference type="SUPFAM" id="SSF48013">
    <property type="entry name" value="NusB-like"/>
    <property type="match status" value="1"/>
</dbReference>
<keyword id="KW-1185">Reference proteome</keyword>
<keyword id="KW-0694">RNA-binding</keyword>
<keyword id="KW-0804">Transcription</keyword>
<keyword id="KW-0889">Transcription antitermination</keyword>
<keyword id="KW-0805">Transcription regulation</keyword>
<protein>
    <recommendedName>
        <fullName evidence="1">Transcription antitermination protein NusB</fullName>
    </recommendedName>
    <alternativeName>
        <fullName evidence="1">Antitermination factor NusB</fullName>
    </alternativeName>
</protein>
<feature type="chain" id="PRO_0000176551" description="Transcription antitermination protein NusB">
    <location>
        <begin position="1"/>
        <end position="144"/>
    </location>
</feature>
<gene>
    <name evidence="1" type="primary">nusB</name>
    <name type="ordered locus">Lxx11010</name>
</gene>